<keyword id="KW-0028">Amino-acid biosynthesis</keyword>
<keyword id="KW-0963">Cytoplasm</keyword>
<keyword id="KW-0368">Histidine biosynthesis</keyword>
<keyword id="KW-1185">Reference proteome</keyword>
<accession>A3DJE9</accession>
<proteinExistence type="inferred from homology"/>
<sequence>MAEWKIYTPEGVQDILQNECFFKKNLEDRIRKVFRASGYYEVETPIVEFYDVFSTEENIIPQETMFKFFDQQGRILVLRPDLTIPIARVAATKLKDAAYPLRISYIGNAFKYNELGGGKQKEFTQAGVEIIGVNTPEADAEVIATAIDAVKATGLENFQIDIGQVEFFKGLMEETGLSEEETEKMRVLIDRKDFLGIEELVEEHNIRDDLKELILDFPKLFGSTDVIDRVEKYPINERSIKALNNLRSIINILDDYGLSKYVSVDLGMVQSLNYYSGTIFRGFTYGVGFPILSGGRYDRLVEKFGKSSPATGFSMGINMVMMALDRQKVEFEKPRVDTLVCYREEGRKTAFQICETLRKQGLAVEVDINGGDFETARNYAALKGIGGILKVLDDENIEIHNLEKGEVSKVTISELLKA</sequence>
<reference key="1">
    <citation type="submission" date="2007-02" db="EMBL/GenBank/DDBJ databases">
        <title>Complete sequence of Clostridium thermocellum ATCC 27405.</title>
        <authorList>
            <consortium name="US DOE Joint Genome Institute"/>
            <person name="Copeland A."/>
            <person name="Lucas S."/>
            <person name="Lapidus A."/>
            <person name="Barry K."/>
            <person name="Detter J.C."/>
            <person name="Glavina del Rio T."/>
            <person name="Hammon N."/>
            <person name="Israni S."/>
            <person name="Dalin E."/>
            <person name="Tice H."/>
            <person name="Pitluck S."/>
            <person name="Chertkov O."/>
            <person name="Brettin T."/>
            <person name="Bruce D."/>
            <person name="Han C."/>
            <person name="Tapia R."/>
            <person name="Gilna P."/>
            <person name="Schmutz J."/>
            <person name="Larimer F."/>
            <person name="Land M."/>
            <person name="Hauser L."/>
            <person name="Kyrpides N."/>
            <person name="Mikhailova N."/>
            <person name="Wu J.H.D."/>
            <person name="Newcomb M."/>
            <person name="Richardson P."/>
        </authorList>
    </citation>
    <scope>NUCLEOTIDE SEQUENCE [LARGE SCALE GENOMIC DNA]</scope>
    <source>
        <strain>ATCC 27405 / DSM 1237 / JCM 9322 / NBRC 103400 / NCIMB 10682 / NRRL B-4536 / VPI 7372</strain>
    </source>
</reference>
<organism>
    <name type="scientific">Acetivibrio thermocellus (strain ATCC 27405 / DSM 1237 / JCM 9322 / NBRC 103400 / NCIMB 10682 / NRRL B-4536 / VPI 7372)</name>
    <name type="common">Clostridium thermocellum</name>
    <dbReference type="NCBI Taxonomy" id="203119"/>
    <lineage>
        <taxon>Bacteria</taxon>
        <taxon>Bacillati</taxon>
        <taxon>Bacillota</taxon>
        <taxon>Clostridia</taxon>
        <taxon>Eubacteriales</taxon>
        <taxon>Oscillospiraceae</taxon>
        <taxon>Acetivibrio</taxon>
    </lineage>
</organism>
<evidence type="ECO:0000255" key="1">
    <source>
        <dbReference type="HAMAP-Rule" id="MF_00125"/>
    </source>
</evidence>
<gene>
    <name evidence="1" type="primary">hisZ</name>
    <name type="ordered locus">Cthe_2880</name>
</gene>
<dbReference type="EMBL" id="CP000568">
    <property type="protein sequence ID" value="ABN54078.1"/>
    <property type="molecule type" value="Genomic_DNA"/>
</dbReference>
<dbReference type="RefSeq" id="WP_003514572.1">
    <property type="nucleotide sequence ID" value="NC_009012.1"/>
</dbReference>
<dbReference type="SMR" id="A3DJE9"/>
<dbReference type="STRING" id="203119.Cthe_2880"/>
<dbReference type="GeneID" id="35805955"/>
<dbReference type="KEGG" id="cth:Cthe_2880"/>
<dbReference type="eggNOG" id="COG0124">
    <property type="taxonomic scope" value="Bacteria"/>
</dbReference>
<dbReference type="HOGENOM" id="CLU_025113_0_2_9"/>
<dbReference type="OrthoDB" id="9800814at2"/>
<dbReference type="UniPathway" id="UPA00031">
    <property type="reaction ID" value="UER00006"/>
</dbReference>
<dbReference type="Proteomes" id="UP000002145">
    <property type="component" value="Chromosome"/>
</dbReference>
<dbReference type="GO" id="GO:0005737">
    <property type="term" value="C:cytoplasm"/>
    <property type="evidence" value="ECO:0007669"/>
    <property type="project" value="UniProtKB-SubCell"/>
</dbReference>
<dbReference type="GO" id="GO:0140096">
    <property type="term" value="F:catalytic activity, acting on a protein"/>
    <property type="evidence" value="ECO:0007669"/>
    <property type="project" value="UniProtKB-ARBA"/>
</dbReference>
<dbReference type="GO" id="GO:0004821">
    <property type="term" value="F:histidine-tRNA ligase activity"/>
    <property type="evidence" value="ECO:0007669"/>
    <property type="project" value="TreeGrafter"/>
</dbReference>
<dbReference type="GO" id="GO:0016740">
    <property type="term" value="F:transferase activity"/>
    <property type="evidence" value="ECO:0007669"/>
    <property type="project" value="UniProtKB-ARBA"/>
</dbReference>
<dbReference type="GO" id="GO:0006427">
    <property type="term" value="P:histidyl-tRNA aminoacylation"/>
    <property type="evidence" value="ECO:0007669"/>
    <property type="project" value="TreeGrafter"/>
</dbReference>
<dbReference type="GO" id="GO:0000105">
    <property type="term" value="P:L-histidine biosynthetic process"/>
    <property type="evidence" value="ECO:0007669"/>
    <property type="project" value="UniProtKB-UniRule"/>
</dbReference>
<dbReference type="CDD" id="cd00773">
    <property type="entry name" value="HisRS-like_core"/>
    <property type="match status" value="1"/>
</dbReference>
<dbReference type="Gene3D" id="3.40.50.800">
    <property type="entry name" value="Anticodon-binding domain"/>
    <property type="match status" value="1"/>
</dbReference>
<dbReference type="Gene3D" id="3.30.930.10">
    <property type="entry name" value="Bira Bifunctional Protein, Domain 2"/>
    <property type="match status" value="1"/>
</dbReference>
<dbReference type="HAMAP" id="MF_00125">
    <property type="entry name" value="HisZ"/>
    <property type="match status" value="1"/>
</dbReference>
<dbReference type="InterPro" id="IPR006195">
    <property type="entry name" value="aa-tRNA-synth_II"/>
</dbReference>
<dbReference type="InterPro" id="IPR045864">
    <property type="entry name" value="aa-tRNA-synth_II/BPL/LPL"/>
</dbReference>
<dbReference type="InterPro" id="IPR036621">
    <property type="entry name" value="Anticodon-bd_dom_sf"/>
</dbReference>
<dbReference type="InterPro" id="IPR041715">
    <property type="entry name" value="HisRS-like_core"/>
</dbReference>
<dbReference type="InterPro" id="IPR004516">
    <property type="entry name" value="HisRS/HisZ"/>
</dbReference>
<dbReference type="InterPro" id="IPR004517">
    <property type="entry name" value="HisZ"/>
</dbReference>
<dbReference type="NCBIfam" id="TIGR00443">
    <property type="entry name" value="hisZ_biosyn_reg"/>
    <property type="match status" value="1"/>
</dbReference>
<dbReference type="PANTHER" id="PTHR43707:SF6">
    <property type="entry name" value="ATP PHOSPHORIBOSYLTRANSFERASE REGULATORY SUBUNIT"/>
    <property type="match status" value="1"/>
</dbReference>
<dbReference type="PANTHER" id="PTHR43707">
    <property type="entry name" value="HISTIDYL-TRNA SYNTHETASE"/>
    <property type="match status" value="1"/>
</dbReference>
<dbReference type="Pfam" id="PF13393">
    <property type="entry name" value="tRNA-synt_His"/>
    <property type="match status" value="1"/>
</dbReference>
<dbReference type="PIRSF" id="PIRSF001549">
    <property type="entry name" value="His-tRNA_synth"/>
    <property type="match status" value="1"/>
</dbReference>
<dbReference type="SUPFAM" id="SSF52954">
    <property type="entry name" value="Class II aaRS ABD-related"/>
    <property type="match status" value="1"/>
</dbReference>
<dbReference type="SUPFAM" id="SSF55681">
    <property type="entry name" value="Class II aaRS and biotin synthetases"/>
    <property type="match status" value="1"/>
</dbReference>
<dbReference type="PROSITE" id="PS50862">
    <property type="entry name" value="AA_TRNA_LIGASE_II"/>
    <property type="match status" value="1"/>
</dbReference>
<name>HISZ_ACET2</name>
<feature type="chain" id="PRO_1000016260" description="ATP phosphoribosyltransferase regulatory subunit">
    <location>
        <begin position="1"/>
        <end position="418"/>
    </location>
</feature>
<comment type="function">
    <text evidence="1">Required for the first step of histidine biosynthesis. May allow the feedback regulation of ATP phosphoribosyltransferase activity by histidine.</text>
</comment>
<comment type="pathway">
    <text evidence="1">Amino-acid biosynthesis; L-histidine biosynthesis; L-histidine from 5-phospho-alpha-D-ribose 1-diphosphate: step 1/9.</text>
</comment>
<comment type="subunit">
    <text evidence="1">Heteromultimer composed of HisG and HisZ subunits.</text>
</comment>
<comment type="subcellular location">
    <subcellularLocation>
        <location evidence="1">Cytoplasm</location>
    </subcellularLocation>
</comment>
<comment type="miscellaneous">
    <text>This function is generally fulfilled by the C-terminal part of HisG, which is missing in some bacteria such as this one.</text>
</comment>
<comment type="similarity">
    <text evidence="1">Belongs to the class-II aminoacyl-tRNA synthetase family. HisZ subfamily.</text>
</comment>
<protein>
    <recommendedName>
        <fullName evidence="1">ATP phosphoribosyltransferase regulatory subunit</fullName>
    </recommendedName>
</protein>